<geneLocation type="mitochondrion"/>
<comment type="function">
    <text evidence="2">Component of the ubiquinol-cytochrome c reductase complex (complex III or cytochrome b-c1 complex) that is part of the mitochondrial respiratory chain. The b-c1 complex mediates electron transfer from ubiquinol to cytochrome c. Contributes to the generation of a proton gradient across the mitochondrial membrane that is then used for ATP synthesis.</text>
</comment>
<comment type="cofactor">
    <cofactor evidence="2">
        <name>heme b</name>
        <dbReference type="ChEBI" id="CHEBI:60344"/>
    </cofactor>
    <text evidence="2">Binds 2 heme b groups non-covalently.</text>
</comment>
<comment type="subunit">
    <text evidence="2">The cytochrome bc1 complex contains 11 subunits: 3 respiratory subunits (MT-CYB, CYC1 and UQCRFS1), 2 core proteins (UQCRC1 and UQCRC2) and 6 low-molecular weight proteins (UQCRH/QCR6, UQCRB/QCR7, UQCRQ/QCR8, UQCR10/QCR9, UQCR11/QCR10 and a cleavage product of UQCRFS1). This cytochrome bc1 complex then forms a dimer.</text>
</comment>
<comment type="subcellular location">
    <subcellularLocation>
        <location evidence="2">Mitochondrion inner membrane</location>
        <topology evidence="2">Multi-pass membrane protein</topology>
    </subcellularLocation>
</comment>
<comment type="miscellaneous">
    <text evidence="1">Heme 1 (or BL or b562) is low-potential and absorbs at about 562 nm, and heme 2 (or BH or b566) is high-potential and absorbs at about 566 nm.</text>
</comment>
<comment type="similarity">
    <text evidence="3 4">Belongs to the cytochrome b family.</text>
</comment>
<comment type="caution">
    <text evidence="2">The full-length protein contains only eight transmembrane helices, not nine as predicted by bioinformatics tools.</text>
</comment>
<accession>Q8WGF7</accession>
<gene>
    <name type="primary">MT-CYB</name>
    <name type="synonym">COB</name>
    <name type="synonym">CYTB</name>
    <name type="synonym">MTCYB</name>
</gene>
<keyword id="KW-0249">Electron transport</keyword>
<keyword id="KW-0349">Heme</keyword>
<keyword id="KW-0408">Iron</keyword>
<keyword id="KW-0472">Membrane</keyword>
<keyword id="KW-0479">Metal-binding</keyword>
<keyword id="KW-0496">Mitochondrion</keyword>
<keyword id="KW-0999">Mitochondrion inner membrane</keyword>
<keyword id="KW-0679">Respiratory chain</keyword>
<keyword id="KW-0812">Transmembrane</keyword>
<keyword id="KW-1133">Transmembrane helix</keyword>
<keyword id="KW-0813">Transport</keyword>
<keyword id="KW-0830">Ubiquinone</keyword>
<evidence type="ECO:0000250" key="1"/>
<evidence type="ECO:0000250" key="2">
    <source>
        <dbReference type="UniProtKB" id="P00157"/>
    </source>
</evidence>
<evidence type="ECO:0000255" key="3">
    <source>
        <dbReference type="PROSITE-ProRule" id="PRU00967"/>
    </source>
</evidence>
<evidence type="ECO:0000255" key="4">
    <source>
        <dbReference type="PROSITE-ProRule" id="PRU00968"/>
    </source>
</evidence>
<organism>
    <name type="scientific">Monophyllus redmani</name>
    <name type="common">Greater Antillean long-tongued bat</name>
    <dbReference type="NCBI Taxonomy" id="148052"/>
    <lineage>
        <taxon>Eukaryota</taxon>
        <taxon>Metazoa</taxon>
        <taxon>Chordata</taxon>
        <taxon>Craniata</taxon>
        <taxon>Vertebrata</taxon>
        <taxon>Euteleostomi</taxon>
        <taxon>Mammalia</taxon>
        <taxon>Eutheria</taxon>
        <taxon>Laurasiatheria</taxon>
        <taxon>Chiroptera</taxon>
        <taxon>Yangochiroptera</taxon>
        <taxon>Phyllostomidae</taxon>
        <taxon>Glossophaginae</taxon>
        <taxon>Monophyllus</taxon>
    </lineage>
</organism>
<proteinExistence type="inferred from homology"/>
<sequence length="379" mass="42603">MTNIRKTHPLLKIINSSFVDLPAPSSLSSWWNFGSLLGVCLAVQILTGLFLAMHYTSDTATAFNSVAHICRDVNYGWTLRYLHANGASMFFICLYLHVGRGLYYGSYTYSETWNIGILLLFAVMATAFMGYVLPWGQMSFWGATVITNLLSAIPYIGTDLVQWIWGGFSVDKATLTRFFAFHFLLPFIVAALVMVHLLFLHETGSNNPTGIPSDPDMIPFHPYYTIKDILGFLIMLTALSALVLFSPDLLGDPDNYIPANPLNTPPHIKPEWYFLFAYAILRSIPNKLGGVLALVLSILILAVVPILHTSKQRSMMFRPLSQFLFWLLVAVLFTLTWIGGQPVEYPYVIIGQVASILYFMILLVLMPLVSIVENRLLKW</sequence>
<name>CYB_MONRE</name>
<protein>
    <recommendedName>
        <fullName>Cytochrome b</fullName>
    </recommendedName>
    <alternativeName>
        <fullName>Complex III subunit 3</fullName>
    </alternativeName>
    <alternativeName>
        <fullName>Complex III subunit III</fullName>
    </alternativeName>
    <alternativeName>
        <fullName>Cytochrome b-c1 complex subunit 3</fullName>
    </alternativeName>
    <alternativeName>
        <fullName>Ubiquinol-cytochrome-c reductase complex cytochrome b subunit</fullName>
    </alternativeName>
</protein>
<feature type="chain" id="PRO_0000254826" description="Cytochrome b">
    <location>
        <begin position="1"/>
        <end position="379"/>
    </location>
</feature>
<feature type="transmembrane region" description="Helical" evidence="2">
    <location>
        <begin position="33"/>
        <end position="53"/>
    </location>
</feature>
<feature type="transmembrane region" description="Helical" evidence="2">
    <location>
        <begin position="77"/>
        <end position="98"/>
    </location>
</feature>
<feature type="transmembrane region" description="Helical" evidence="2">
    <location>
        <begin position="113"/>
        <end position="133"/>
    </location>
</feature>
<feature type="transmembrane region" description="Helical" evidence="2">
    <location>
        <begin position="178"/>
        <end position="198"/>
    </location>
</feature>
<feature type="transmembrane region" description="Helical" evidence="2">
    <location>
        <begin position="226"/>
        <end position="246"/>
    </location>
</feature>
<feature type="transmembrane region" description="Helical" evidence="2">
    <location>
        <begin position="288"/>
        <end position="308"/>
    </location>
</feature>
<feature type="transmembrane region" description="Helical" evidence="2">
    <location>
        <begin position="320"/>
        <end position="340"/>
    </location>
</feature>
<feature type="transmembrane region" description="Helical" evidence="2">
    <location>
        <begin position="347"/>
        <end position="367"/>
    </location>
</feature>
<feature type="binding site" description="axial binding residue" evidence="2">
    <location>
        <position position="83"/>
    </location>
    <ligand>
        <name>heme b</name>
        <dbReference type="ChEBI" id="CHEBI:60344"/>
        <label>b562</label>
    </ligand>
    <ligandPart>
        <name>Fe</name>
        <dbReference type="ChEBI" id="CHEBI:18248"/>
    </ligandPart>
</feature>
<feature type="binding site" description="axial binding residue" evidence="2">
    <location>
        <position position="97"/>
    </location>
    <ligand>
        <name>heme b</name>
        <dbReference type="ChEBI" id="CHEBI:60344"/>
        <label>b566</label>
    </ligand>
    <ligandPart>
        <name>Fe</name>
        <dbReference type="ChEBI" id="CHEBI:18248"/>
    </ligandPart>
</feature>
<feature type="binding site" description="axial binding residue" evidence="2">
    <location>
        <position position="182"/>
    </location>
    <ligand>
        <name>heme b</name>
        <dbReference type="ChEBI" id="CHEBI:60344"/>
        <label>b562</label>
    </ligand>
    <ligandPart>
        <name>Fe</name>
        <dbReference type="ChEBI" id="CHEBI:18248"/>
    </ligandPart>
</feature>
<feature type="binding site" description="axial binding residue" evidence="2">
    <location>
        <position position="196"/>
    </location>
    <ligand>
        <name>heme b</name>
        <dbReference type="ChEBI" id="CHEBI:60344"/>
        <label>b566</label>
    </ligand>
    <ligandPart>
        <name>Fe</name>
        <dbReference type="ChEBI" id="CHEBI:18248"/>
    </ligandPart>
</feature>
<feature type="binding site" evidence="2">
    <location>
        <position position="201"/>
    </location>
    <ligand>
        <name>a ubiquinone</name>
        <dbReference type="ChEBI" id="CHEBI:16389"/>
    </ligand>
</feature>
<reference key="1">
    <citation type="journal article" date="2001" name="J. Mammal.">
        <title>Systematics of bats of the genus Glossophaga (Chiroptera: Phyllostomidae) and phylogeography in G. soricina based on the cytochrome b gene.</title>
        <authorList>
            <person name="Hoffmann F.G."/>
            <person name="Baker R.J."/>
        </authorList>
    </citation>
    <scope>NUCLEOTIDE SEQUENCE [GENOMIC DNA]</scope>
</reference>
<dbReference type="EMBL" id="AF382888">
    <property type="protein sequence ID" value="AAL32362.1"/>
    <property type="molecule type" value="Genomic_DNA"/>
</dbReference>
<dbReference type="SMR" id="Q8WGF7"/>
<dbReference type="GO" id="GO:0005743">
    <property type="term" value="C:mitochondrial inner membrane"/>
    <property type="evidence" value="ECO:0007669"/>
    <property type="project" value="UniProtKB-SubCell"/>
</dbReference>
<dbReference type="GO" id="GO:0045275">
    <property type="term" value="C:respiratory chain complex III"/>
    <property type="evidence" value="ECO:0007669"/>
    <property type="project" value="InterPro"/>
</dbReference>
<dbReference type="GO" id="GO:0046872">
    <property type="term" value="F:metal ion binding"/>
    <property type="evidence" value="ECO:0007669"/>
    <property type="project" value="UniProtKB-KW"/>
</dbReference>
<dbReference type="GO" id="GO:0008121">
    <property type="term" value="F:ubiquinol-cytochrome-c reductase activity"/>
    <property type="evidence" value="ECO:0007669"/>
    <property type="project" value="InterPro"/>
</dbReference>
<dbReference type="GO" id="GO:0006122">
    <property type="term" value="P:mitochondrial electron transport, ubiquinol to cytochrome c"/>
    <property type="evidence" value="ECO:0007669"/>
    <property type="project" value="TreeGrafter"/>
</dbReference>
<dbReference type="CDD" id="cd00290">
    <property type="entry name" value="cytochrome_b_C"/>
    <property type="match status" value="1"/>
</dbReference>
<dbReference type="CDD" id="cd00284">
    <property type="entry name" value="Cytochrome_b_N"/>
    <property type="match status" value="1"/>
</dbReference>
<dbReference type="FunFam" id="1.20.810.10:FF:000002">
    <property type="entry name" value="Cytochrome b"/>
    <property type="match status" value="1"/>
</dbReference>
<dbReference type="Gene3D" id="1.20.810.10">
    <property type="entry name" value="Cytochrome Bc1 Complex, Chain C"/>
    <property type="match status" value="1"/>
</dbReference>
<dbReference type="InterPro" id="IPR005798">
    <property type="entry name" value="Cyt_b/b6_C"/>
</dbReference>
<dbReference type="InterPro" id="IPR036150">
    <property type="entry name" value="Cyt_b/b6_C_sf"/>
</dbReference>
<dbReference type="InterPro" id="IPR005797">
    <property type="entry name" value="Cyt_b/b6_N"/>
</dbReference>
<dbReference type="InterPro" id="IPR027387">
    <property type="entry name" value="Cytb/b6-like_sf"/>
</dbReference>
<dbReference type="InterPro" id="IPR030689">
    <property type="entry name" value="Cytochrome_b"/>
</dbReference>
<dbReference type="InterPro" id="IPR048260">
    <property type="entry name" value="Cytochrome_b_C_euk/bac"/>
</dbReference>
<dbReference type="InterPro" id="IPR048259">
    <property type="entry name" value="Cytochrome_b_N_euk/bac"/>
</dbReference>
<dbReference type="InterPro" id="IPR016174">
    <property type="entry name" value="Di-haem_cyt_TM"/>
</dbReference>
<dbReference type="PANTHER" id="PTHR19271">
    <property type="entry name" value="CYTOCHROME B"/>
    <property type="match status" value="1"/>
</dbReference>
<dbReference type="PANTHER" id="PTHR19271:SF16">
    <property type="entry name" value="CYTOCHROME B"/>
    <property type="match status" value="1"/>
</dbReference>
<dbReference type="Pfam" id="PF00032">
    <property type="entry name" value="Cytochrom_B_C"/>
    <property type="match status" value="1"/>
</dbReference>
<dbReference type="Pfam" id="PF00033">
    <property type="entry name" value="Cytochrome_B"/>
    <property type="match status" value="1"/>
</dbReference>
<dbReference type="PIRSF" id="PIRSF038885">
    <property type="entry name" value="COB"/>
    <property type="match status" value="1"/>
</dbReference>
<dbReference type="SUPFAM" id="SSF81648">
    <property type="entry name" value="a domain/subunit of cytochrome bc1 complex (Ubiquinol-cytochrome c reductase)"/>
    <property type="match status" value="1"/>
</dbReference>
<dbReference type="SUPFAM" id="SSF81342">
    <property type="entry name" value="Transmembrane di-heme cytochromes"/>
    <property type="match status" value="1"/>
</dbReference>
<dbReference type="PROSITE" id="PS51003">
    <property type="entry name" value="CYTB_CTER"/>
    <property type="match status" value="1"/>
</dbReference>
<dbReference type="PROSITE" id="PS51002">
    <property type="entry name" value="CYTB_NTER"/>
    <property type="match status" value="1"/>
</dbReference>